<protein>
    <recommendedName>
        <fullName evidence="1">Leucyl/phenylalanyl-tRNA--protein transferase</fullName>
        <ecNumber evidence="1">2.3.2.6</ecNumber>
    </recommendedName>
    <alternativeName>
        <fullName evidence="1">L/F-transferase</fullName>
    </alternativeName>
    <alternativeName>
        <fullName evidence="1">Leucyltransferase</fullName>
    </alternativeName>
    <alternativeName>
        <fullName evidence="1">Phenyalanyltransferase</fullName>
    </alternativeName>
</protein>
<sequence>MPELVWLNPHDTVFPPTTSALEDPNGLLAVGGDLSPARLIAAYKKGIFPWFDDSQPILWWSPDPRMVLLPQNLHLGKTLKKLAKKQAFKITIDTHFSDVMQGCAQPRADQDGTWITTDMENAYLELHKLGYAHSIEAWQDGELVGGLYGIAINRVFYGESMFSKVSGASKIAFANLATQLASWGFYAIDCQVATEYLASFGAAEMPRVEFEQILQQSLQSQPPKCQIEGWQNSWNMPDYGQLF</sequence>
<keyword id="KW-0012">Acyltransferase</keyword>
<keyword id="KW-0963">Cytoplasm</keyword>
<keyword id="KW-1185">Reference proteome</keyword>
<keyword id="KW-0808">Transferase</keyword>
<feature type="chain" id="PRO_0000258094" description="Leucyl/phenylalanyl-tRNA--protein transferase">
    <location>
        <begin position="1"/>
        <end position="243"/>
    </location>
</feature>
<proteinExistence type="inferred from homology"/>
<comment type="function">
    <text evidence="1">Functions in the N-end rule pathway of protein degradation where it conjugates Leu, Phe and, less efficiently, Met from aminoacyl-tRNAs to the N-termini of proteins containing an N-terminal arginine or lysine.</text>
</comment>
<comment type="catalytic activity">
    <reaction evidence="1">
        <text>N-terminal L-lysyl-[protein] + L-leucyl-tRNA(Leu) = N-terminal L-leucyl-L-lysyl-[protein] + tRNA(Leu) + H(+)</text>
        <dbReference type="Rhea" id="RHEA:12340"/>
        <dbReference type="Rhea" id="RHEA-COMP:9613"/>
        <dbReference type="Rhea" id="RHEA-COMP:9622"/>
        <dbReference type="Rhea" id="RHEA-COMP:12670"/>
        <dbReference type="Rhea" id="RHEA-COMP:12671"/>
        <dbReference type="ChEBI" id="CHEBI:15378"/>
        <dbReference type="ChEBI" id="CHEBI:65249"/>
        <dbReference type="ChEBI" id="CHEBI:78442"/>
        <dbReference type="ChEBI" id="CHEBI:78494"/>
        <dbReference type="ChEBI" id="CHEBI:133043"/>
        <dbReference type="EC" id="2.3.2.6"/>
    </reaction>
</comment>
<comment type="catalytic activity">
    <reaction evidence="1">
        <text>N-terminal L-arginyl-[protein] + L-leucyl-tRNA(Leu) = N-terminal L-leucyl-L-arginyl-[protein] + tRNA(Leu) + H(+)</text>
        <dbReference type="Rhea" id="RHEA:50416"/>
        <dbReference type="Rhea" id="RHEA-COMP:9613"/>
        <dbReference type="Rhea" id="RHEA-COMP:9622"/>
        <dbReference type="Rhea" id="RHEA-COMP:12672"/>
        <dbReference type="Rhea" id="RHEA-COMP:12673"/>
        <dbReference type="ChEBI" id="CHEBI:15378"/>
        <dbReference type="ChEBI" id="CHEBI:64719"/>
        <dbReference type="ChEBI" id="CHEBI:78442"/>
        <dbReference type="ChEBI" id="CHEBI:78494"/>
        <dbReference type="ChEBI" id="CHEBI:133044"/>
        <dbReference type="EC" id="2.3.2.6"/>
    </reaction>
</comment>
<comment type="catalytic activity">
    <reaction evidence="1">
        <text>L-phenylalanyl-tRNA(Phe) + an N-terminal L-alpha-aminoacyl-[protein] = an N-terminal L-phenylalanyl-L-alpha-aminoacyl-[protein] + tRNA(Phe)</text>
        <dbReference type="Rhea" id="RHEA:43632"/>
        <dbReference type="Rhea" id="RHEA-COMP:9668"/>
        <dbReference type="Rhea" id="RHEA-COMP:9699"/>
        <dbReference type="Rhea" id="RHEA-COMP:10636"/>
        <dbReference type="Rhea" id="RHEA-COMP:10637"/>
        <dbReference type="ChEBI" id="CHEBI:78442"/>
        <dbReference type="ChEBI" id="CHEBI:78531"/>
        <dbReference type="ChEBI" id="CHEBI:78597"/>
        <dbReference type="ChEBI" id="CHEBI:83561"/>
        <dbReference type="EC" id="2.3.2.6"/>
    </reaction>
</comment>
<comment type="subcellular location">
    <subcellularLocation>
        <location evidence="1">Cytoplasm</location>
    </subcellularLocation>
</comment>
<comment type="similarity">
    <text evidence="1">Belongs to the L/F-transferase family.</text>
</comment>
<organism>
    <name type="scientific">Saccharophagus degradans (strain 2-40 / ATCC 43961 / DSM 17024)</name>
    <dbReference type="NCBI Taxonomy" id="203122"/>
    <lineage>
        <taxon>Bacteria</taxon>
        <taxon>Pseudomonadati</taxon>
        <taxon>Pseudomonadota</taxon>
        <taxon>Gammaproteobacteria</taxon>
        <taxon>Cellvibrionales</taxon>
        <taxon>Cellvibrionaceae</taxon>
        <taxon>Saccharophagus</taxon>
    </lineage>
</organism>
<name>LFTR_SACD2</name>
<evidence type="ECO:0000255" key="1">
    <source>
        <dbReference type="HAMAP-Rule" id="MF_00688"/>
    </source>
</evidence>
<gene>
    <name evidence="1" type="primary">aat</name>
    <name type="ordered locus">Sde_1691</name>
</gene>
<dbReference type="EC" id="2.3.2.6" evidence="1"/>
<dbReference type="EMBL" id="CP000282">
    <property type="protein sequence ID" value="ABD80951.1"/>
    <property type="molecule type" value="Genomic_DNA"/>
</dbReference>
<dbReference type="RefSeq" id="WP_011468171.1">
    <property type="nucleotide sequence ID" value="NC_007912.1"/>
</dbReference>
<dbReference type="SMR" id="Q21K28"/>
<dbReference type="STRING" id="203122.Sde_1691"/>
<dbReference type="GeneID" id="98613366"/>
<dbReference type="KEGG" id="sde:Sde_1691"/>
<dbReference type="eggNOG" id="COG2360">
    <property type="taxonomic scope" value="Bacteria"/>
</dbReference>
<dbReference type="HOGENOM" id="CLU_075045_0_0_6"/>
<dbReference type="OrthoDB" id="9790282at2"/>
<dbReference type="Proteomes" id="UP000001947">
    <property type="component" value="Chromosome"/>
</dbReference>
<dbReference type="GO" id="GO:0005737">
    <property type="term" value="C:cytoplasm"/>
    <property type="evidence" value="ECO:0007669"/>
    <property type="project" value="UniProtKB-SubCell"/>
</dbReference>
<dbReference type="GO" id="GO:0008914">
    <property type="term" value="F:leucyl-tRNA--protein transferase activity"/>
    <property type="evidence" value="ECO:0007669"/>
    <property type="project" value="UniProtKB-UniRule"/>
</dbReference>
<dbReference type="GO" id="GO:0030163">
    <property type="term" value="P:protein catabolic process"/>
    <property type="evidence" value="ECO:0007669"/>
    <property type="project" value="UniProtKB-UniRule"/>
</dbReference>
<dbReference type="FunFam" id="3.30.70.3550:FF:000001">
    <property type="entry name" value="Leucyl/phenylalanyl-tRNA--protein transferase"/>
    <property type="match status" value="1"/>
</dbReference>
<dbReference type="Gene3D" id="3.40.630.70">
    <property type="entry name" value="Leucyl/phenylalanyl-tRNA-protein transferase, C-terminal domain"/>
    <property type="match status" value="1"/>
</dbReference>
<dbReference type="Gene3D" id="3.30.70.3550">
    <property type="entry name" value="Leucyl/phenylalanyl-tRNA-protein transferase, N-terminal domain"/>
    <property type="match status" value="1"/>
</dbReference>
<dbReference type="HAMAP" id="MF_00688">
    <property type="entry name" value="Leu_Phe_trans"/>
    <property type="match status" value="1"/>
</dbReference>
<dbReference type="InterPro" id="IPR016181">
    <property type="entry name" value="Acyl_CoA_acyltransferase"/>
</dbReference>
<dbReference type="InterPro" id="IPR004616">
    <property type="entry name" value="Leu/Phe-tRNA_Trfase"/>
</dbReference>
<dbReference type="InterPro" id="IPR042203">
    <property type="entry name" value="Leu/Phe-tRNA_Trfase_C"/>
</dbReference>
<dbReference type="InterPro" id="IPR042221">
    <property type="entry name" value="Leu/Phe-tRNA_Trfase_N"/>
</dbReference>
<dbReference type="NCBIfam" id="TIGR00667">
    <property type="entry name" value="aat"/>
    <property type="match status" value="1"/>
</dbReference>
<dbReference type="PANTHER" id="PTHR30098">
    <property type="entry name" value="LEUCYL/PHENYLALANYL-TRNA--PROTEIN TRANSFERASE"/>
    <property type="match status" value="1"/>
</dbReference>
<dbReference type="PANTHER" id="PTHR30098:SF2">
    <property type="entry name" value="LEUCYL_PHENYLALANYL-TRNA--PROTEIN TRANSFERASE"/>
    <property type="match status" value="1"/>
</dbReference>
<dbReference type="Pfam" id="PF03588">
    <property type="entry name" value="Leu_Phe_trans"/>
    <property type="match status" value="1"/>
</dbReference>
<dbReference type="SUPFAM" id="SSF55729">
    <property type="entry name" value="Acyl-CoA N-acyltransferases (Nat)"/>
    <property type="match status" value="1"/>
</dbReference>
<accession>Q21K28</accession>
<reference key="1">
    <citation type="journal article" date="2008" name="PLoS Genet.">
        <title>Complete genome sequence of the complex carbohydrate-degrading marine bacterium, Saccharophagus degradans strain 2-40 T.</title>
        <authorList>
            <person name="Weiner R.M."/>
            <person name="Taylor L.E. II"/>
            <person name="Henrissat B."/>
            <person name="Hauser L."/>
            <person name="Land M."/>
            <person name="Coutinho P.M."/>
            <person name="Rancurel C."/>
            <person name="Saunders E.H."/>
            <person name="Longmire A.G."/>
            <person name="Zhang H."/>
            <person name="Bayer E.A."/>
            <person name="Gilbert H.J."/>
            <person name="Larimer F."/>
            <person name="Zhulin I.B."/>
            <person name="Ekborg N.A."/>
            <person name="Lamed R."/>
            <person name="Richardson P.M."/>
            <person name="Borovok I."/>
            <person name="Hutcheson S."/>
        </authorList>
    </citation>
    <scope>NUCLEOTIDE SEQUENCE [LARGE SCALE GENOMIC DNA]</scope>
    <source>
        <strain>2-40 / ATCC 43961 / DSM 17024</strain>
    </source>
</reference>